<protein>
    <recommendedName>
        <fullName evidence="1">Large ribosomal subunit protein uL13</fullName>
    </recommendedName>
    <alternativeName>
        <fullName evidence="2">50S ribosomal protein L13</fullName>
    </alternativeName>
</protein>
<dbReference type="EMBL" id="CP000448">
    <property type="protein sequence ID" value="ABI69589.1"/>
    <property type="molecule type" value="Genomic_DNA"/>
</dbReference>
<dbReference type="RefSeq" id="WP_011641673.1">
    <property type="nucleotide sequence ID" value="NC_008346.1"/>
</dbReference>
<dbReference type="SMR" id="Q0AUL5"/>
<dbReference type="STRING" id="335541.Swol_2298"/>
<dbReference type="KEGG" id="swo:Swol_2298"/>
<dbReference type="eggNOG" id="COG0102">
    <property type="taxonomic scope" value="Bacteria"/>
</dbReference>
<dbReference type="HOGENOM" id="CLU_082184_2_2_9"/>
<dbReference type="OrthoDB" id="9801330at2"/>
<dbReference type="Proteomes" id="UP000001968">
    <property type="component" value="Chromosome"/>
</dbReference>
<dbReference type="GO" id="GO:0022625">
    <property type="term" value="C:cytosolic large ribosomal subunit"/>
    <property type="evidence" value="ECO:0007669"/>
    <property type="project" value="TreeGrafter"/>
</dbReference>
<dbReference type="GO" id="GO:0003729">
    <property type="term" value="F:mRNA binding"/>
    <property type="evidence" value="ECO:0007669"/>
    <property type="project" value="TreeGrafter"/>
</dbReference>
<dbReference type="GO" id="GO:0003735">
    <property type="term" value="F:structural constituent of ribosome"/>
    <property type="evidence" value="ECO:0007669"/>
    <property type="project" value="InterPro"/>
</dbReference>
<dbReference type="GO" id="GO:0017148">
    <property type="term" value="P:negative regulation of translation"/>
    <property type="evidence" value="ECO:0007669"/>
    <property type="project" value="TreeGrafter"/>
</dbReference>
<dbReference type="GO" id="GO:0006412">
    <property type="term" value="P:translation"/>
    <property type="evidence" value="ECO:0007669"/>
    <property type="project" value="UniProtKB-UniRule"/>
</dbReference>
<dbReference type="CDD" id="cd00392">
    <property type="entry name" value="Ribosomal_L13"/>
    <property type="match status" value="1"/>
</dbReference>
<dbReference type="FunFam" id="3.90.1180.10:FF:000001">
    <property type="entry name" value="50S ribosomal protein L13"/>
    <property type="match status" value="1"/>
</dbReference>
<dbReference type="Gene3D" id="3.90.1180.10">
    <property type="entry name" value="Ribosomal protein L13"/>
    <property type="match status" value="1"/>
</dbReference>
<dbReference type="HAMAP" id="MF_01366">
    <property type="entry name" value="Ribosomal_uL13"/>
    <property type="match status" value="1"/>
</dbReference>
<dbReference type="InterPro" id="IPR005822">
    <property type="entry name" value="Ribosomal_uL13"/>
</dbReference>
<dbReference type="InterPro" id="IPR005823">
    <property type="entry name" value="Ribosomal_uL13_bac-type"/>
</dbReference>
<dbReference type="InterPro" id="IPR036899">
    <property type="entry name" value="Ribosomal_uL13_sf"/>
</dbReference>
<dbReference type="NCBIfam" id="TIGR01066">
    <property type="entry name" value="rplM_bact"/>
    <property type="match status" value="1"/>
</dbReference>
<dbReference type="PANTHER" id="PTHR11545:SF2">
    <property type="entry name" value="LARGE RIBOSOMAL SUBUNIT PROTEIN UL13M"/>
    <property type="match status" value="1"/>
</dbReference>
<dbReference type="PANTHER" id="PTHR11545">
    <property type="entry name" value="RIBOSOMAL PROTEIN L13"/>
    <property type="match status" value="1"/>
</dbReference>
<dbReference type="Pfam" id="PF00572">
    <property type="entry name" value="Ribosomal_L13"/>
    <property type="match status" value="1"/>
</dbReference>
<dbReference type="PIRSF" id="PIRSF002181">
    <property type="entry name" value="Ribosomal_L13"/>
    <property type="match status" value="1"/>
</dbReference>
<dbReference type="SUPFAM" id="SSF52161">
    <property type="entry name" value="Ribosomal protein L13"/>
    <property type="match status" value="1"/>
</dbReference>
<organism>
    <name type="scientific">Syntrophomonas wolfei subsp. wolfei (strain DSM 2245B / Goettingen)</name>
    <dbReference type="NCBI Taxonomy" id="335541"/>
    <lineage>
        <taxon>Bacteria</taxon>
        <taxon>Bacillati</taxon>
        <taxon>Bacillota</taxon>
        <taxon>Clostridia</taxon>
        <taxon>Eubacteriales</taxon>
        <taxon>Syntrophomonadaceae</taxon>
        <taxon>Syntrophomonas</taxon>
    </lineage>
</organism>
<comment type="function">
    <text evidence="1">This protein is one of the early assembly proteins of the 50S ribosomal subunit, although it is not seen to bind rRNA by itself. It is important during the early stages of 50S assembly.</text>
</comment>
<comment type="subunit">
    <text evidence="1">Part of the 50S ribosomal subunit.</text>
</comment>
<comment type="similarity">
    <text evidence="1">Belongs to the universal ribosomal protein uL13 family.</text>
</comment>
<evidence type="ECO:0000255" key="1">
    <source>
        <dbReference type="HAMAP-Rule" id="MF_01366"/>
    </source>
</evidence>
<evidence type="ECO:0000305" key="2"/>
<accession>Q0AUL5</accession>
<gene>
    <name evidence="1" type="primary">rplM</name>
    <name type="ordered locus">Swol_2298</name>
</gene>
<proteinExistence type="inferred from homology"/>
<name>RL13_SYNWW</name>
<keyword id="KW-1185">Reference proteome</keyword>
<keyword id="KW-0687">Ribonucleoprotein</keyword>
<keyword id="KW-0689">Ribosomal protein</keyword>
<feature type="chain" id="PRO_0000261812" description="Large ribosomal subunit protein uL13">
    <location>
        <begin position="1"/>
        <end position="144"/>
    </location>
</feature>
<reference key="1">
    <citation type="journal article" date="2010" name="Environ. Microbiol.">
        <title>The genome of Syntrophomonas wolfei: new insights into syntrophic metabolism and biohydrogen production.</title>
        <authorList>
            <person name="Sieber J.R."/>
            <person name="Sims D.R."/>
            <person name="Han C."/>
            <person name="Kim E."/>
            <person name="Lykidis A."/>
            <person name="Lapidus A.L."/>
            <person name="McDonnald E."/>
            <person name="Rohlin L."/>
            <person name="Culley D.E."/>
            <person name="Gunsalus R."/>
            <person name="McInerney M.J."/>
        </authorList>
    </citation>
    <scope>NUCLEOTIDE SEQUENCE [LARGE SCALE GENOMIC DNA]</scope>
    <source>
        <strain>DSM 2245B / Goettingen</strain>
    </source>
</reference>
<sequence>MKTYVAKPAEVDRKWYVIDASDKTLGRLSSEVASILRGKHKPIFTPHVDTGDFVIVINAAKIKLTGDKLNQKKFRHHTGYPGGLREMDYRTLLQKRPEKAIEAAVQGMLPHNRLGRSMIKKLKVYSGSEHPHQAQKPELRELKG</sequence>